<name>CHEB1_CUPMC</name>
<reference key="1">
    <citation type="journal article" date="2010" name="PLoS ONE">
        <title>The complete genome sequence of Cupriavidus metallidurans strain CH34, a master survivalist in harsh and anthropogenic environments.</title>
        <authorList>
            <person name="Janssen P.J."/>
            <person name="Van Houdt R."/>
            <person name="Moors H."/>
            <person name="Monsieurs P."/>
            <person name="Morin N."/>
            <person name="Michaux A."/>
            <person name="Benotmane M.A."/>
            <person name="Leys N."/>
            <person name="Vallaeys T."/>
            <person name="Lapidus A."/>
            <person name="Monchy S."/>
            <person name="Medigue C."/>
            <person name="Taghavi S."/>
            <person name="McCorkle S."/>
            <person name="Dunn J."/>
            <person name="van der Lelie D."/>
            <person name="Mergeay M."/>
        </authorList>
    </citation>
    <scope>NUCLEOTIDE SEQUENCE [LARGE SCALE GENOMIC DNA]</scope>
    <source>
        <strain>ATCC 43123 / DSM 2839 / NBRC 102507 / CH34</strain>
    </source>
</reference>
<feature type="chain" id="PRO_0000264300" description="Protein-glutamate methylesterase/protein-glutamine glutaminase 1">
    <location>
        <begin position="1"/>
        <end position="357"/>
    </location>
</feature>
<feature type="domain" description="Response regulatory" evidence="1">
    <location>
        <begin position="7"/>
        <end position="124"/>
    </location>
</feature>
<feature type="domain" description="CheB-type methylesterase" evidence="1">
    <location>
        <begin position="158"/>
        <end position="350"/>
    </location>
</feature>
<feature type="active site" evidence="1">
    <location>
        <position position="170"/>
    </location>
</feature>
<feature type="active site" evidence="1">
    <location>
        <position position="196"/>
    </location>
</feature>
<feature type="active site" evidence="1">
    <location>
        <position position="292"/>
    </location>
</feature>
<feature type="modified residue" description="4-aspartylphosphate" evidence="1">
    <location>
        <position position="58"/>
    </location>
</feature>
<keyword id="KW-0145">Chemotaxis</keyword>
<keyword id="KW-0963">Cytoplasm</keyword>
<keyword id="KW-0378">Hydrolase</keyword>
<keyword id="KW-0597">Phosphoprotein</keyword>
<keyword id="KW-0614">Plasmid</keyword>
<keyword id="KW-1185">Reference proteome</keyword>
<sequence>MTAAKIKVLCVDDSALIRSLMSEIINSQPDMEVVGTAPDPLVARDLIKRVNPDVLTLDVEMPRMDGLDFLERLMRLRPMPVLMVSSLTERGSEITMRALELGAVDFVTKPKLGIREGLLDYTQTIADKIRAASRARVRARAEQSAGAAPVAPMLRAPLLSTEKLIIVGASTGGTEAIKDFLTPLPPDSPAVMIVQHMPAGFTKSFAHRLNGLCRITVKEAEHGERVLPGYAYIAPGDSHLLLARSGANYVAHLSQEAPVNRHRPSVDVLFDSAAIHGGKNVTGVILTGMGKDGARGMLRMREAGAYNLAQDEQSCIVFGMPKEAIAAGGVHEVVPLHQMSQRVMAHLATFGARAQRV</sequence>
<geneLocation type="plasmid">
    <name>megaplasmid CH34</name>
</geneLocation>
<evidence type="ECO:0000255" key="1">
    <source>
        <dbReference type="HAMAP-Rule" id="MF_00099"/>
    </source>
</evidence>
<comment type="function">
    <text evidence="1">Involved in chemotaxis. Part of a chemotaxis signal transduction system that modulates chemotaxis in response to various stimuli. Catalyzes the demethylation of specific methylglutamate residues introduced into the chemoreceptors (methyl-accepting chemotaxis proteins or MCP) by CheR. Also mediates the irreversible deamidation of specific glutamine residues to glutamic acid.</text>
</comment>
<comment type="catalytic activity">
    <reaction evidence="1">
        <text>[protein]-L-glutamate 5-O-methyl ester + H2O = L-glutamyl-[protein] + methanol + H(+)</text>
        <dbReference type="Rhea" id="RHEA:23236"/>
        <dbReference type="Rhea" id="RHEA-COMP:10208"/>
        <dbReference type="Rhea" id="RHEA-COMP:10311"/>
        <dbReference type="ChEBI" id="CHEBI:15377"/>
        <dbReference type="ChEBI" id="CHEBI:15378"/>
        <dbReference type="ChEBI" id="CHEBI:17790"/>
        <dbReference type="ChEBI" id="CHEBI:29973"/>
        <dbReference type="ChEBI" id="CHEBI:82795"/>
        <dbReference type="EC" id="3.1.1.61"/>
    </reaction>
</comment>
<comment type="catalytic activity">
    <reaction evidence="1">
        <text>L-glutaminyl-[protein] + H2O = L-glutamyl-[protein] + NH4(+)</text>
        <dbReference type="Rhea" id="RHEA:16441"/>
        <dbReference type="Rhea" id="RHEA-COMP:10207"/>
        <dbReference type="Rhea" id="RHEA-COMP:10208"/>
        <dbReference type="ChEBI" id="CHEBI:15377"/>
        <dbReference type="ChEBI" id="CHEBI:28938"/>
        <dbReference type="ChEBI" id="CHEBI:29973"/>
        <dbReference type="ChEBI" id="CHEBI:30011"/>
        <dbReference type="EC" id="3.5.1.44"/>
    </reaction>
</comment>
<comment type="subcellular location">
    <subcellularLocation>
        <location evidence="1">Cytoplasm</location>
    </subcellularLocation>
</comment>
<comment type="domain">
    <text evidence="1">Contains a C-terminal catalytic domain, and an N-terminal region which modulates catalytic activity.</text>
</comment>
<comment type="PTM">
    <text evidence="1">Phosphorylated by CheA. Phosphorylation of the N-terminal regulatory domain activates the methylesterase activity.</text>
</comment>
<comment type="similarity">
    <text evidence="1">Belongs to the CheB family.</text>
</comment>
<dbReference type="EC" id="3.1.1.61" evidence="1"/>
<dbReference type="EC" id="3.5.1.44" evidence="1"/>
<dbReference type="EMBL" id="CP000353">
    <property type="protein sequence ID" value="ABF10565.1"/>
    <property type="molecule type" value="Genomic_DNA"/>
</dbReference>
<dbReference type="RefSeq" id="WP_011518214.1">
    <property type="nucleotide sequence ID" value="NC_007974.2"/>
</dbReference>
<dbReference type="SMR" id="Q1LH11"/>
<dbReference type="KEGG" id="rme:Rmet_3693"/>
<dbReference type="eggNOG" id="COG2201">
    <property type="taxonomic scope" value="Bacteria"/>
</dbReference>
<dbReference type="HOGENOM" id="CLU_000445_51_0_4"/>
<dbReference type="Proteomes" id="UP000002429">
    <property type="component" value="Plasmid megaplasmid CH34"/>
</dbReference>
<dbReference type="GO" id="GO:0005737">
    <property type="term" value="C:cytoplasm"/>
    <property type="evidence" value="ECO:0007669"/>
    <property type="project" value="UniProtKB-SubCell"/>
</dbReference>
<dbReference type="GO" id="GO:0000156">
    <property type="term" value="F:phosphorelay response regulator activity"/>
    <property type="evidence" value="ECO:0007669"/>
    <property type="project" value="InterPro"/>
</dbReference>
<dbReference type="GO" id="GO:0008984">
    <property type="term" value="F:protein-glutamate methylesterase activity"/>
    <property type="evidence" value="ECO:0007669"/>
    <property type="project" value="UniProtKB-UniRule"/>
</dbReference>
<dbReference type="GO" id="GO:0050568">
    <property type="term" value="F:protein-glutamine glutaminase activity"/>
    <property type="evidence" value="ECO:0007669"/>
    <property type="project" value="UniProtKB-UniRule"/>
</dbReference>
<dbReference type="GO" id="GO:0006935">
    <property type="term" value="P:chemotaxis"/>
    <property type="evidence" value="ECO:0007669"/>
    <property type="project" value="UniProtKB-UniRule"/>
</dbReference>
<dbReference type="CDD" id="cd16432">
    <property type="entry name" value="CheB_Rec"/>
    <property type="match status" value="1"/>
</dbReference>
<dbReference type="CDD" id="cd17541">
    <property type="entry name" value="REC_CheB-like"/>
    <property type="match status" value="1"/>
</dbReference>
<dbReference type="FunFam" id="3.40.50.2300:FF:000060">
    <property type="entry name" value="Protein-glutamate methylesterase/protein-glutamine glutaminase"/>
    <property type="match status" value="1"/>
</dbReference>
<dbReference type="Gene3D" id="3.40.50.2300">
    <property type="match status" value="1"/>
</dbReference>
<dbReference type="Gene3D" id="3.40.50.180">
    <property type="entry name" value="Methylesterase CheB, C-terminal domain"/>
    <property type="match status" value="1"/>
</dbReference>
<dbReference type="HAMAP" id="MF_00099">
    <property type="entry name" value="CheB_chemtxs"/>
    <property type="match status" value="1"/>
</dbReference>
<dbReference type="InterPro" id="IPR008248">
    <property type="entry name" value="CheB-like"/>
</dbReference>
<dbReference type="InterPro" id="IPR035909">
    <property type="entry name" value="CheB_C"/>
</dbReference>
<dbReference type="InterPro" id="IPR011006">
    <property type="entry name" value="CheY-like_superfamily"/>
</dbReference>
<dbReference type="InterPro" id="IPR000673">
    <property type="entry name" value="Sig_transdc_resp-reg_Me-estase"/>
</dbReference>
<dbReference type="InterPro" id="IPR001789">
    <property type="entry name" value="Sig_transdc_resp-reg_receiver"/>
</dbReference>
<dbReference type="NCBIfam" id="NF001965">
    <property type="entry name" value="PRK00742.1"/>
    <property type="match status" value="1"/>
</dbReference>
<dbReference type="NCBIfam" id="NF009206">
    <property type="entry name" value="PRK12555.1"/>
    <property type="match status" value="1"/>
</dbReference>
<dbReference type="PANTHER" id="PTHR42872">
    <property type="entry name" value="PROTEIN-GLUTAMATE METHYLESTERASE/PROTEIN-GLUTAMINE GLUTAMINASE"/>
    <property type="match status" value="1"/>
</dbReference>
<dbReference type="PANTHER" id="PTHR42872:SF6">
    <property type="entry name" value="PROTEIN-GLUTAMATE METHYLESTERASE_PROTEIN-GLUTAMINE GLUTAMINASE"/>
    <property type="match status" value="1"/>
</dbReference>
<dbReference type="Pfam" id="PF01339">
    <property type="entry name" value="CheB_methylest"/>
    <property type="match status" value="1"/>
</dbReference>
<dbReference type="Pfam" id="PF00072">
    <property type="entry name" value="Response_reg"/>
    <property type="match status" value="1"/>
</dbReference>
<dbReference type="PIRSF" id="PIRSF000876">
    <property type="entry name" value="RR_chemtxs_CheB"/>
    <property type="match status" value="1"/>
</dbReference>
<dbReference type="SMART" id="SM00448">
    <property type="entry name" value="REC"/>
    <property type="match status" value="1"/>
</dbReference>
<dbReference type="SUPFAM" id="SSF52172">
    <property type="entry name" value="CheY-like"/>
    <property type="match status" value="1"/>
</dbReference>
<dbReference type="SUPFAM" id="SSF52738">
    <property type="entry name" value="Methylesterase CheB, C-terminal domain"/>
    <property type="match status" value="1"/>
</dbReference>
<dbReference type="PROSITE" id="PS50122">
    <property type="entry name" value="CHEB"/>
    <property type="match status" value="1"/>
</dbReference>
<dbReference type="PROSITE" id="PS50110">
    <property type="entry name" value="RESPONSE_REGULATORY"/>
    <property type="match status" value="1"/>
</dbReference>
<proteinExistence type="inferred from homology"/>
<protein>
    <recommendedName>
        <fullName evidence="1">Protein-glutamate methylesterase/protein-glutamine glutaminase 1</fullName>
        <ecNumber evidence="1">3.1.1.61</ecNumber>
        <ecNumber evidence="1">3.5.1.44</ecNumber>
    </recommendedName>
</protein>
<organism>
    <name type="scientific">Cupriavidus metallidurans (strain ATCC 43123 / DSM 2839 / NBRC 102507 / CH34)</name>
    <name type="common">Ralstonia metallidurans</name>
    <dbReference type="NCBI Taxonomy" id="266264"/>
    <lineage>
        <taxon>Bacteria</taxon>
        <taxon>Pseudomonadati</taxon>
        <taxon>Pseudomonadota</taxon>
        <taxon>Betaproteobacteria</taxon>
        <taxon>Burkholderiales</taxon>
        <taxon>Burkholderiaceae</taxon>
        <taxon>Cupriavidus</taxon>
    </lineage>
</organism>
<gene>
    <name evidence="1" type="primary">cheB1</name>
    <name type="ordered locus">Rmet_3693</name>
</gene>
<accession>Q1LH11</accession>